<organism>
    <name type="scientific">Bacillus cereus (strain B4264)</name>
    <dbReference type="NCBI Taxonomy" id="405532"/>
    <lineage>
        <taxon>Bacteria</taxon>
        <taxon>Bacillati</taxon>
        <taxon>Bacillota</taxon>
        <taxon>Bacilli</taxon>
        <taxon>Bacillales</taxon>
        <taxon>Bacillaceae</taxon>
        <taxon>Bacillus</taxon>
        <taxon>Bacillus cereus group</taxon>
    </lineage>
</organism>
<evidence type="ECO:0000255" key="1">
    <source>
        <dbReference type="HAMAP-Rule" id="MF_00531"/>
    </source>
</evidence>
<evidence type="ECO:0000305" key="2"/>
<dbReference type="EMBL" id="CP001176">
    <property type="protein sequence ID" value="ACK62255.1"/>
    <property type="molecule type" value="Genomic_DNA"/>
</dbReference>
<dbReference type="RefSeq" id="WP_000124454.1">
    <property type="nucleotide sequence ID" value="NZ_VEHB01000017.1"/>
</dbReference>
<dbReference type="SMR" id="B7HJ52"/>
<dbReference type="GeneID" id="92887807"/>
<dbReference type="KEGG" id="bcb:BCB4264_A0135"/>
<dbReference type="HOGENOM" id="CLU_144911_0_1_9"/>
<dbReference type="Proteomes" id="UP000007096">
    <property type="component" value="Chromosome"/>
</dbReference>
<dbReference type="GO" id="GO:0005737">
    <property type="term" value="C:cytoplasm"/>
    <property type="evidence" value="ECO:0007669"/>
    <property type="project" value="UniProtKB-ARBA"/>
</dbReference>
<dbReference type="GO" id="GO:0015935">
    <property type="term" value="C:small ribosomal subunit"/>
    <property type="evidence" value="ECO:0007669"/>
    <property type="project" value="InterPro"/>
</dbReference>
<dbReference type="GO" id="GO:0019843">
    <property type="term" value="F:rRNA binding"/>
    <property type="evidence" value="ECO:0007669"/>
    <property type="project" value="UniProtKB-UniRule"/>
</dbReference>
<dbReference type="GO" id="GO:0003735">
    <property type="term" value="F:structural constituent of ribosome"/>
    <property type="evidence" value="ECO:0007669"/>
    <property type="project" value="InterPro"/>
</dbReference>
<dbReference type="GO" id="GO:0000028">
    <property type="term" value="P:ribosomal small subunit assembly"/>
    <property type="evidence" value="ECO:0007669"/>
    <property type="project" value="TreeGrafter"/>
</dbReference>
<dbReference type="GO" id="GO:0006412">
    <property type="term" value="P:translation"/>
    <property type="evidence" value="ECO:0007669"/>
    <property type="project" value="UniProtKB-UniRule"/>
</dbReference>
<dbReference type="FunFam" id="3.30.860.10:FF:000001">
    <property type="entry name" value="30S ribosomal protein S19"/>
    <property type="match status" value="1"/>
</dbReference>
<dbReference type="Gene3D" id="3.30.860.10">
    <property type="entry name" value="30s Ribosomal Protein S19, Chain A"/>
    <property type="match status" value="1"/>
</dbReference>
<dbReference type="HAMAP" id="MF_00531">
    <property type="entry name" value="Ribosomal_uS19"/>
    <property type="match status" value="1"/>
</dbReference>
<dbReference type="InterPro" id="IPR002222">
    <property type="entry name" value="Ribosomal_uS19"/>
</dbReference>
<dbReference type="InterPro" id="IPR005732">
    <property type="entry name" value="Ribosomal_uS19_bac-type"/>
</dbReference>
<dbReference type="InterPro" id="IPR020934">
    <property type="entry name" value="Ribosomal_uS19_CS"/>
</dbReference>
<dbReference type="InterPro" id="IPR023575">
    <property type="entry name" value="Ribosomal_uS19_SF"/>
</dbReference>
<dbReference type="NCBIfam" id="TIGR01050">
    <property type="entry name" value="rpsS_bact"/>
    <property type="match status" value="1"/>
</dbReference>
<dbReference type="PANTHER" id="PTHR11880">
    <property type="entry name" value="RIBOSOMAL PROTEIN S19P FAMILY MEMBER"/>
    <property type="match status" value="1"/>
</dbReference>
<dbReference type="PANTHER" id="PTHR11880:SF8">
    <property type="entry name" value="SMALL RIBOSOMAL SUBUNIT PROTEIN US19M"/>
    <property type="match status" value="1"/>
</dbReference>
<dbReference type="Pfam" id="PF00203">
    <property type="entry name" value="Ribosomal_S19"/>
    <property type="match status" value="1"/>
</dbReference>
<dbReference type="PIRSF" id="PIRSF002144">
    <property type="entry name" value="Ribosomal_S19"/>
    <property type="match status" value="1"/>
</dbReference>
<dbReference type="PRINTS" id="PR00975">
    <property type="entry name" value="RIBOSOMALS19"/>
</dbReference>
<dbReference type="SUPFAM" id="SSF54570">
    <property type="entry name" value="Ribosomal protein S19"/>
    <property type="match status" value="1"/>
</dbReference>
<dbReference type="PROSITE" id="PS00323">
    <property type="entry name" value="RIBOSOMAL_S19"/>
    <property type="match status" value="1"/>
</dbReference>
<comment type="function">
    <text evidence="1">Protein S19 forms a complex with S13 that binds strongly to the 16S ribosomal RNA.</text>
</comment>
<comment type="similarity">
    <text evidence="1">Belongs to the universal ribosomal protein uS19 family.</text>
</comment>
<sequence length="92" mass="10628">MARSLKKGPFVDDHLMSKMEKLVASEQKQVVKTWSRRSTIFPQFIGHTIAVYDGRKHVPVYITEDMVGHKLGEFAPTRTYKGHLADDKKTRR</sequence>
<reference key="1">
    <citation type="submission" date="2008-10" db="EMBL/GenBank/DDBJ databases">
        <title>Genome sequence of Bacillus cereus B4264.</title>
        <authorList>
            <person name="Dodson R.J."/>
            <person name="Durkin A.S."/>
            <person name="Rosovitz M.J."/>
            <person name="Rasko D.A."/>
            <person name="Hoffmaster A."/>
            <person name="Ravel J."/>
            <person name="Sutton G."/>
        </authorList>
    </citation>
    <scope>NUCLEOTIDE SEQUENCE [LARGE SCALE GENOMIC DNA]</scope>
    <source>
        <strain>B4264</strain>
    </source>
</reference>
<gene>
    <name evidence="1" type="primary">rpsS</name>
    <name type="ordered locus">BCB4264_A0135</name>
</gene>
<proteinExistence type="inferred from homology"/>
<accession>B7HJ52</accession>
<name>RS19_BACC4</name>
<keyword id="KW-0687">Ribonucleoprotein</keyword>
<keyword id="KW-0689">Ribosomal protein</keyword>
<keyword id="KW-0694">RNA-binding</keyword>
<keyword id="KW-0699">rRNA-binding</keyword>
<protein>
    <recommendedName>
        <fullName evidence="1">Small ribosomal subunit protein uS19</fullName>
    </recommendedName>
    <alternativeName>
        <fullName evidence="2">30S ribosomal protein S19</fullName>
    </alternativeName>
</protein>
<feature type="chain" id="PRO_1000127927" description="Small ribosomal subunit protein uS19">
    <location>
        <begin position="1"/>
        <end position="92"/>
    </location>
</feature>